<name>PRMA_CLOBM</name>
<dbReference type="EC" id="2.1.1.-" evidence="1"/>
<dbReference type="EMBL" id="CP000962">
    <property type="protein sequence ID" value="ACA56895.1"/>
    <property type="molecule type" value="Genomic_DNA"/>
</dbReference>
<dbReference type="RefSeq" id="WP_012344703.1">
    <property type="nucleotide sequence ID" value="NC_010520.1"/>
</dbReference>
<dbReference type="SMR" id="B1KZN5"/>
<dbReference type="KEGG" id="cbl:CLK_2342"/>
<dbReference type="HOGENOM" id="CLU_049382_0_1_9"/>
<dbReference type="GO" id="GO:0005737">
    <property type="term" value="C:cytoplasm"/>
    <property type="evidence" value="ECO:0007669"/>
    <property type="project" value="UniProtKB-SubCell"/>
</dbReference>
<dbReference type="GO" id="GO:0016279">
    <property type="term" value="F:protein-lysine N-methyltransferase activity"/>
    <property type="evidence" value="ECO:0007669"/>
    <property type="project" value="RHEA"/>
</dbReference>
<dbReference type="GO" id="GO:0032259">
    <property type="term" value="P:methylation"/>
    <property type="evidence" value="ECO:0007669"/>
    <property type="project" value="UniProtKB-KW"/>
</dbReference>
<dbReference type="CDD" id="cd02440">
    <property type="entry name" value="AdoMet_MTases"/>
    <property type="match status" value="1"/>
</dbReference>
<dbReference type="Gene3D" id="3.40.50.150">
    <property type="entry name" value="Vaccinia Virus protein VP39"/>
    <property type="match status" value="1"/>
</dbReference>
<dbReference type="HAMAP" id="MF_00735">
    <property type="entry name" value="Methyltr_PrmA"/>
    <property type="match status" value="1"/>
</dbReference>
<dbReference type="InterPro" id="IPR050078">
    <property type="entry name" value="Ribosomal_L11_MeTrfase_PrmA"/>
</dbReference>
<dbReference type="InterPro" id="IPR004498">
    <property type="entry name" value="Ribosomal_PrmA_MeTrfase"/>
</dbReference>
<dbReference type="InterPro" id="IPR029063">
    <property type="entry name" value="SAM-dependent_MTases_sf"/>
</dbReference>
<dbReference type="NCBIfam" id="TIGR00406">
    <property type="entry name" value="prmA"/>
    <property type="match status" value="1"/>
</dbReference>
<dbReference type="PANTHER" id="PTHR43648">
    <property type="entry name" value="ELECTRON TRANSFER FLAVOPROTEIN BETA SUBUNIT LYSINE METHYLTRANSFERASE"/>
    <property type="match status" value="1"/>
</dbReference>
<dbReference type="PANTHER" id="PTHR43648:SF1">
    <property type="entry name" value="ELECTRON TRANSFER FLAVOPROTEIN BETA SUBUNIT LYSINE METHYLTRANSFERASE"/>
    <property type="match status" value="1"/>
</dbReference>
<dbReference type="Pfam" id="PF06325">
    <property type="entry name" value="PrmA"/>
    <property type="match status" value="1"/>
</dbReference>
<dbReference type="PIRSF" id="PIRSF000401">
    <property type="entry name" value="RPL11_MTase"/>
    <property type="match status" value="1"/>
</dbReference>
<dbReference type="SUPFAM" id="SSF53335">
    <property type="entry name" value="S-adenosyl-L-methionine-dependent methyltransferases"/>
    <property type="match status" value="1"/>
</dbReference>
<keyword id="KW-0963">Cytoplasm</keyword>
<keyword id="KW-0489">Methyltransferase</keyword>
<keyword id="KW-0949">S-adenosyl-L-methionine</keyword>
<keyword id="KW-0808">Transferase</keyword>
<proteinExistence type="inferred from homology"/>
<protein>
    <recommendedName>
        <fullName evidence="1">Ribosomal protein L11 methyltransferase</fullName>
        <shortName evidence="1">L11 Mtase</shortName>
        <ecNumber evidence="1">2.1.1.-</ecNumber>
    </recommendedName>
</protein>
<comment type="function">
    <text evidence="1">Methylates ribosomal protein L11.</text>
</comment>
<comment type="catalytic activity">
    <reaction evidence="1">
        <text>L-lysyl-[protein] + 3 S-adenosyl-L-methionine = N(6),N(6),N(6)-trimethyl-L-lysyl-[protein] + 3 S-adenosyl-L-homocysteine + 3 H(+)</text>
        <dbReference type="Rhea" id="RHEA:54192"/>
        <dbReference type="Rhea" id="RHEA-COMP:9752"/>
        <dbReference type="Rhea" id="RHEA-COMP:13826"/>
        <dbReference type="ChEBI" id="CHEBI:15378"/>
        <dbReference type="ChEBI" id="CHEBI:29969"/>
        <dbReference type="ChEBI" id="CHEBI:57856"/>
        <dbReference type="ChEBI" id="CHEBI:59789"/>
        <dbReference type="ChEBI" id="CHEBI:61961"/>
    </reaction>
</comment>
<comment type="subcellular location">
    <subcellularLocation>
        <location evidence="1">Cytoplasm</location>
    </subcellularLocation>
</comment>
<comment type="similarity">
    <text evidence="1">Belongs to the methyltransferase superfamily. PrmA family.</text>
</comment>
<gene>
    <name evidence="1" type="primary">prmA</name>
    <name type="ordered locus">CLK_2342</name>
</gene>
<feature type="chain" id="PRO_1000192605" description="Ribosomal protein L11 methyltransferase">
    <location>
        <begin position="1"/>
        <end position="312"/>
    </location>
</feature>
<feature type="binding site" evidence="1">
    <location>
        <position position="163"/>
    </location>
    <ligand>
        <name>S-adenosyl-L-methionine</name>
        <dbReference type="ChEBI" id="CHEBI:59789"/>
    </ligand>
</feature>
<feature type="binding site" evidence="1">
    <location>
        <position position="184"/>
    </location>
    <ligand>
        <name>S-adenosyl-L-methionine</name>
        <dbReference type="ChEBI" id="CHEBI:59789"/>
    </ligand>
</feature>
<feature type="binding site" evidence="1">
    <location>
        <position position="206"/>
    </location>
    <ligand>
        <name>S-adenosyl-L-methionine</name>
        <dbReference type="ChEBI" id="CHEBI:59789"/>
    </ligand>
</feature>
<feature type="binding site" evidence="1">
    <location>
        <position position="248"/>
    </location>
    <ligand>
        <name>S-adenosyl-L-methionine</name>
        <dbReference type="ChEBI" id="CHEBI:59789"/>
    </ligand>
</feature>
<organism>
    <name type="scientific">Clostridium botulinum (strain Loch Maree / Type A3)</name>
    <dbReference type="NCBI Taxonomy" id="498214"/>
    <lineage>
        <taxon>Bacteria</taxon>
        <taxon>Bacillati</taxon>
        <taxon>Bacillota</taxon>
        <taxon>Clostridia</taxon>
        <taxon>Eubacteriales</taxon>
        <taxon>Clostridiaceae</taxon>
        <taxon>Clostridium</taxon>
    </lineage>
</organism>
<accession>B1KZN5</accession>
<sequence length="312" mass="35337">MDKEWLEVCIYTSSEALEAISGILYNTGVKGVSIEDPKDIEFKKKHPGDWDYFDETLLKVKDTAIVKGYYKEDDKFNEYLDYIKKSVSNLDQFGIDKGEGLVEVHKVNEEDWENNWKKYYKPTKVSNKIVIKPIWENYDKKQEEIIVELDPGMAFGTGTHETTRMCINALEKYIKEDRTVFDIGCGSGILSIAAAKLGAKHVIGVDLDPVAVKSSKENIKYNNLDNIEILEGNLMEVVEGRANIVVANIIADVIIFLTEGVKAFIEKGGYFIASGIINSRKEDVIKKLEETGFVIEEVREEGEWVCIISKIN</sequence>
<reference key="1">
    <citation type="journal article" date="2007" name="PLoS ONE">
        <title>Analysis of the neurotoxin complex genes in Clostridium botulinum A1-A4 and B1 strains: BoNT/A3, /Ba4 and /B1 clusters are located within plasmids.</title>
        <authorList>
            <person name="Smith T.J."/>
            <person name="Hill K.K."/>
            <person name="Foley B.T."/>
            <person name="Detter J.C."/>
            <person name="Munk A.C."/>
            <person name="Bruce D.C."/>
            <person name="Doggett N.A."/>
            <person name="Smith L.A."/>
            <person name="Marks J.D."/>
            <person name="Xie G."/>
            <person name="Brettin T.S."/>
        </authorList>
    </citation>
    <scope>NUCLEOTIDE SEQUENCE [LARGE SCALE GENOMIC DNA]</scope>
    <source>
        <strain>Loch Maree / Type A3</strain>
    </source>
</reference>
<evidence type="ECO:0000255" key="1">
    <source>
        <dbReference type="HAMAP-Rule" id="MF_00735"/>
    </source>
</evidence>